<protein>
    <recommendedName>
        <fullName>6-phosphogluconolactonase</fullName>
        <shortName>6PGL</shortName>
        <ecNumber>3.1.1.31</ecNumber>
    </recommendedName>
</protein>
<comment type="function">
    <text>Hydrolysis of 6-phosphogluconolactone to 6-phosphogluconate.</text>
</comment>
<comment type="catalytic activity">
    <reaction>
        <text>6-phospho-D-glucono-1,5-lactone + H2O = 6-phospho-D-gluconate + H(+)</text>
        <dbReference type="Rhea" id="RHEA:12556"/>
        <dbReference type="ChEBI" id="CHEBI:15377"/>
        <dbReference type="ChEBI" id="CHEBI:15378"/>
        <dbReference type="ChEBI" id="CHEBI:57955"/>
        <dbReference type="ChEBI" id="CHEBI:58759"/>
        <dbReference type="EC" id="3.1.1.31"/>
    </reaction>
</comment>
<comment type="pathway">
    <text>Carbohydrate degradation; pentose phosphate pathway; D-ribulose 5-phosphate from D-glucose 6-phosphate (oxidative stage): step 2/3.</text>
</comment>
<comment type="similarity">
    <text evidence="1">Belongs to the glucosamine/galactosamine-6-phosphate isomerase family. 6-phosphogluconolactonase subfamily.</text>
</comment>
<accession>O83490</accession>
<sequence>MKKHIFEDARAIAAFLVSVFDSRLKTQEILWLALSGGSTPREIFRTWAHEFRHHLDWKRLRFFWSDERCVPPTDAQSNFNMTHSALLEPLEINPDAVFRVRGEDAPESACAAYSQEIEARLPRQRGVPCFDIILLGMGADGHTASIFPHEIELWDHSGCCVVATHPDTGQKRVSFTGHLINNAHEIYVVVTGREKQDMLASVASDPHASVPLHAWTLPKRSGCWIPLLRGLYPRKQCKPTV</sequence>
<organism>
    <name type="scientific">Treponema pallidum (strain Nichols)</name>
    <dbReference type="NCBI Taxonomy" id="243276"/>
    <lineage>
        <taxon>Bacteria</taxon>
        <taxon>Pseudomonadati</taxon>
        <taxon>Spirochaetota</taxon>
        <taxon>Spirochaetia</taxon>
        <taxon>Spirochaetales</taxon>
        <taxon>Treponemataceae</taxon>
        <taxon>Treponema</taxon>
    </lineage>
</organism>
<gene>
    <name type="primary">pgl</name>
    <name type="synonym">devB</name>
    <name type="ordered locus">TP_0477</name>
</gene>
<proteinExistence type="inferred from homology"/>
<dbReference type="EC" id="3.1.1.31"/>
<dbReference type="EMBL" id="AE000520">
    <property type="protein sequence ID" value="AAC65464.1"/>
    <property type="molecule type" value="Genomic_DNA"/>
</dbReference>
<dbReference type="PIR" id="C71319">
    <property type="entry name" value="C71319"/>
</dbReference>
<dbReference type="RefSeq" id="WP_010881926.1">
    <property type="nucleotide sequence ID" value="NC_000919.1"/>
</dbReference>
<dbReference type="SMR" id="O83490"/>
<dbReference type="STRING" id="243276.TP_0477"/>
<dbReference type="EnsemblBacteria" id="AAC65464">
    <property type="protein sequence ID" value="AAC65464"/>
    <property type="gene ID" value="TP_0477"/>
</dbReference>
<dbReference type="KEGG" id="tpa:TP_0477"/>
<dbReference type="eggNOG" id="COG0363">
    <property type="taxonomic scope" value="Bacteria"/>
</dbReference>
<dbReference type="HOGENOM" id="CLU_053947_4_0_12"/>
<dbReference type="OrthoDB" id="9810967at2"/>
<dbReference type="UniPathway" id="UPA00115">
    <property type="reaction ID" value="UER00409"/>
</dbReference>
<dbReference type="Proteomes" id="UP000000811">
    <property type="component" value="Chromosome"/>
</dbReference>
<dbReference type="GO" id="GO:0017057">
    <property type="term" value="F:6-phosphogluconolactonase activity"/>
    <property type="evidence" value="ECO:0007669"/>
    <property type="project" value="UniProtKB-EC"/>
</dbReference>
<dbReference type="GO" id="GO:0005975">
    <property type="term" value="P:carbohydrate metabolic process"/>
    <property type="evidence" value="ECO:0007669"/>
    <property type="project" value="InterPro"/>
</dbReference>
<dbReference type="GO" id="GO:0006098">
    <property type="term" value="P:pentose-phosphate shunt"/>
    <property type="evidence" value="ECO:0007669"/>
    <property type="project" value="UniProtKB-UniPathway"/>
</dbReference>
<dbReference type="CDD" id="cd01400">
    <property type="entry name" value="6PGL"/>
    <property type="match status" value="1"/>
</dbReference>
<dbReference type="Gene3D" id="3.40.50.1360">
    <property type="match status" value="1"/>
</dbReference>
<dbReference type="InterPro" id="IPR005900">
    <property type="entry name" value="6-phosphogluconolactonase_DevB"/>
</dbReference>
<dbReference type="InterPro" id="IPR006148">
    <property type="entry name" value="Glc/Gal-6P_isomerase"/>
</dbReference>
<dbReference type="InterPro" id="IPR037171">
    <property type="entry name" value="NagB/RpiA_transferase-like"/>
</dbReference>
<dbReference type="InterPro" id="IPR039104">
    <property type="entry name" value="PGLS"/>
</dbReference>
<dbReference type="NCBIfam" id="TIGR01198">
    <property type="entry name" value="pgl"/>
    <property type="match status" value="1"/>
</dbReference>
<dbReference type="PANTHER" id="PTHR11054">
    <property type="entry name" value="6-PHOSPHOGLUCONOLACTONASE"/>
    <property type="match status" value="1"/>
</dbReference>
<dbReference type="PANTHER" id="PTHR11054:SF0">
    <property type="entry name" value="6-PHOSPHOGLUCONOLACTONASE"/>
    <property type="match status" value="1"/>
</dbReference>
<dbReference type="Pfam" id="PF01182">
    <property type="entry name" value="Glucosamine_iso"/>
    <property type="match status" value="1"/>
</dbReference>
<dbReference type="SUPFAM" id="SSF100950">
    <property type="entry name" value="NagB/RpiA/CoA transferase-like"/>
    <property type="match status" value="1"/>
</dbReference>
<evidence type="ECO:0000305" key="1"/>
<feature type="chain" id="PRO_0000090109" description="6-phosphogluconolactonase">
    <location>
        <begin position="1"/>
        <end position="241"/>
    </location>
</feature>
<name>6PGL_TREPA</name>
<reference key="1">
    <citation type="journal article" date="1998" name="Science">
        <title>Complete genome sequence of Treponema pallidum, the syphilis spirochete.</title>
        <authorList>
            <person name="Fraser C.M."/>
            <person name="Norris S.J."/>
            <person name="Weinstock G.M."/>
            <person name="White O."/>
            <person name="Sutton G.G."/>
            <person name="Dodson R.J."/>
            <person name="Gwinn M.L."/>
            <person name="Hickey E.K."/>
            <person name="Clayton R.A."/>
            <person name="Ketchum K.A."/>
            <person name="Sodergren E."/>
            <person name="Hardham J.M."/>
            <person name="McLeod M.P."/>
            <person name="Salzberg S.L."/>
            <person name="Peterson J.D."/>
            <person name="Khalak H.G."/>
            <person name="Richardson D.L."/>
            <person name="Howell J.K."/>
            <person name="Chidambaram M."/>
            <person name="Utterback T.R."/>
            <person name="McDonald L.A."/>
            <person name="Artiach P."/>
            <person name="Bowman C."/>
            <person name="Cotton M.D."/>
            <person name="Fujii C."/>
            <person name="Garland S.A."/>
            <person name="Hatch B."/>
            <person name="Horst K."/>
            <person name="Roberts K.M."/>
            <person name="Sandusky M."/>
            <person name="Weidman J.F."/>
            <person name="Smith H.O."/>
            <person name="Venter J.C."/>
        </authorList>
    </citation>
    <scope>NUCLEOTIDE SEQUENCE [LARGE SCALE GENOMIC DNA]</scope>
    <source>
        <strain>Nichols</strain>
    </source>
</reference>
<keyword id="KW-0378">Hydrolase</keyword>
<keyword id="KW-1185">Reference proteome</keyword>